<keyword id="KW-0030">Aminoacyl-tRNA synthetase</keyword>
<keyword id="KW-0067">ATP-binding</keyword>
<keyword id="KW-0963">Cytoplasm</keyword>
<keyword id="KW-0436">Ligase</keyword>
<keyword id="KW-0547">Nucleotide-binding</keyword>
<keyword id="KW-0648">Protein biosynthesis</keyword>
<protein>
    <recommendedName>
        <fullName evidence="1">Glycine--tRNA ligase alpha subunit</fullName>
        <ecNumber evidence="1">6.1.1.14</ecNumber>
    </recommendedName>
    <alternativeName>
        <fullName evidence="1">Glycyl-tRNA synthetase alpha subunit</fullName>
        <shortName evidence="1">GlyRS</shortName>
    </alternativeName>
</protein>
<reference key="1">
    <citation type="journal article" date="2006" name="Genome Biol.">
        <title>Genomic analysis reveals that Pseudomonas aeruginosa virulence is combinatorial.</title>
        <authorList>
            <person name="Lee D.G."/>
            <person name="Urbach J.M."/>
            <person name="Wu G."/>
            <person name="Liberati N.T."/>
            <person name="Feinbaum R.L."/>
            <person name="Miyata S."/>
            <person name="Diggins L.T."/>
            <person name="He J."/>
            <person name="Saucier M."/>
            <person name="Deziel E."/>
            <person name="Friedman L."/>
            <person name="Li L."/>
            <person name="Grills G."/>
            <person name="Montgomery K."/>
            <person name="Kucherlapati R."/>
            <person name="Rahme L.G."/>
            <person name="Ausubel F.M."/>
        </authorList>
    </citation>
    <scope>NUCLEOTIDE SEQUENCE [LARGE SCALE GENOMIC DNA]</scope>
    <source>
        <strain>UCBPP-PA14</strain>
    </source>
</reference>
<evidence type="ECO:0000255" key="1">
    <source>
        <dbReference type="HAMAP-Rule" id="MF_00254"/>
    </source>
</evidence>
<dbReference type="EC" id="6.1.1.14" evidence="1"/>
<dbReference type="EMBL" id="CP000438">
    <property type="protein sequence ID" value="ABJ14965.1"/>
    <property type="molecule type" value="Genomic_DNA"/>
</dbReference>
<dbReference type="RefSeq" id="WP_003097276.1">
    <property type="nucleotide sequence ID" value="NZ_CP034244.1"/>
</dbReference>
<dbReference type="SMR" id="Q02V72"/>
<dbReference type="KEGG" id="pau:PA14_00100"/>
<dbReference type="PseudoCAP" id="PA14_00100"/>
<dbReference type="HOGENOM" id="CLU_057066_1_0_6"/>
<dbReference type="BioCyc" id="PAER208963:G1G74-9-MONOMER"/>
<dbReference type="Proteomes" id="UP000000653">
    <property type="component" value="Chromosome"/>
</dbReference>
<dbReference type="GO" id="GO:0005829">
    <property type="term" value="C:cytosol"/>
    <property type="evidence" value="ECO:0007669"/>
    <property type="project" value="TreeGrafter"/>
</dbReference>
<dbReference type="GO" id="GO:0005524">
    <property type="term" value="F:ATP binding"/>
    <property type="evidence" value="ECO:0007669"/>
    <property type="project" value="UniProtKB-UniRule"/>
</dbReference>
<dbReference type="GO" id="GO:0004820">
    <property type="term" value="F:glycine-tRNA ligase activity"/>
    <property type="evidence" value="ECO:0007669"/>
    <property type="project" value="UniProtKB-UniRule"/>
</dbReference>
<dbReference type="GO" id="GO:0006426">
    <property type="term" value="P:glycyl-tRNA aminoacylation"/>
    <property type="evidence" value="ECO:0007669"/>
    <property type="project" value="UniProtKB-UniRule"/>
</dbReference>
<dbReference type="CDD" id="cd00733">
    <property type="entry name" value="GlyRS_alpha_core"/>
    <property type="match status" value="1"/>
</dbReference>
<dbReference type="FunFam" id="3.30.930.10:FF:000006">
    <property type="entry name" value="Glycine--tRNA ligase alpha subunit"/>
    <property type="match status" value="1"/>
</dbReference>
<dbReference type="Gene3D" id="3.30.930.10">
    <property type="entry name" value="Bira Bifunctional Protein, Domain 2"/>
    <property type="match status" value="1"/>
</dbReference>
<dbReference type="Gene3D" id="1.20.58.180">
    <property type="entry name" value="Class II aaRS and biotin synthetases, domain 2"/>
    <property type="match status" value="1"/>
</dbReference>
<dbReference type="HAMAP" id="MF_00254">
    <property type="entry name" value="Gly_tRNA_synth_alpha"/>
    <property type="match status" value="1"/>
</dbReference>
<dbReference type="InterPro" id="IPR045864">
    <property type="entry name" value="aa-tRNA-synth_II/BPL/LPL"/>
</dbReference>
<dbReference type="InterPro" id="IPR006194">
    <property type="entry name" value="Gly-tRNA-synth_heterodimer"/>
</dbReference>
<dbReference type="InterPro" id="IPR002310">
    <property type="entry name" value="Gly-tRNA_ligase_asu"/>
</dbReference>
<dbReference type="NCBIfam" id="TIGR00388">
    <property type="entry name" value="glyQ"/>
    <property type="match status" value="1"/>
</dbReference>
<dbReference type="NCBIfam" id="NF006827">
    <property type="entry name" value="PRK09348.1"/>
    <property type="match status" value="1"/>
</dbReference>
<dbReference type="PANTHER" id="PTHR30075:SF2">
    <property type="entry name" value="GLYCINE--TRNA LIGASE, CHLOROPLASTIC_MITOCHONDRIAL 2"/>
    <property type="match status" value="1"/>
</dbReference>
<dbReference type="PANTHER" id="PTHR30075">
    <property type="entry name" value="GLYCYL-TRNA SYNTHETASE"/>
    <property type="match status" value="1"/>
</dbReference>
<dbReference type="Pfam" id="PF02091">
    <property type="entry name" value="tRNA-synt_2e"/>
    <property type="match status" value="1"/>
</dbReference>
<dbReference type="PRINTS" id="PR01044">
    <property type="entry name" value="TRNASYNTHGA"/>
</dbReference>
<dbReference type="SUPFAM" id="SSF55681">
    <property type="entry name" value="Class II aaRS and biotin synthetases"/>
    <property type="match status" value="1"/>
</dbReference>
<dbReference type="PROSITE" id="PS50861">
    <property type="entry name" value="AA_TRNA_LIGASE_II_GLYAB"/>
    <property type="match status" value="1"/>
</dbReference>
<organism>
    <name type="scientific">Pseudomonas aeruginosa (strain UCBPP-PA14)</name>
    <dbReference type="NCBI Taxonomy" id="208963"/>
    <lineage>
        <taxon>Bacteria</taxon>
        <taxon>Pseudomonadati</taxon>
        <taxon>Pseudomonadota</taxon>
        <taxon>Gammaproteobacteria</taxon>
        <taxon>Pseudomonadales</taxon>
        <taxon>Pseudomonadaceae</taxon>
        <taxon>Pseudomonas</taxon>
    </lineage>
</organism>
<gene>
    <name evidence="1" type="primary">glyQ</name>
    <name type="ordered locus">PA14_00100</name>
</gene>
<comment type="catalytic activity">
    <reaction evidence="1">
        <text>tRNA(Gly) + glycine + ATP = glycyl-tRNA(Gly) + AMP + diphosphate</text>
        <dbReference type="Rhea" id="RHEA:16013"/>
        <dbReference type="Rhea" id="RHEA-COMP:9664"/>
        <dbReference type="Rhea" id="RHEA-COMP:9683"/>
        <dbReference type="ChEBI" id="CHEBI:30616"/>
        <dbReference type="ChEBI" id="CHEBI:33019"/>
        <dbReference type="ChEBI" id="CHEBI:57305"/>
        <dbReference type="ChEBI" id="CHEBI:78442"/>
        <dbReference type="ChEBI" id="CHEBI:78522"/>
        <dbReference type="ChEBI" id="CHEBI:456215"/>
        <dbReference type="EC" id="6.1.1.14"/>
    </reaction>
</comment>
<comment type="subunit">
    <text evidence="1">Tetramer of two alpha and two beta subunits.</text>
</comment>
<comment type="subcellular location">
    <subcellularLocation>
        <location evidence="1">Cytoplasm</location>
    </subcellularLocation>
</comment>
<comment type="similarity">
    <text evidence="1">Belongs to the class-II aminoacyl-tRNA synthetase family.</text>
</comment>
<feature type="chain" id="PRO_1000047468" description="Glycine--tRNA ligase alpha subunit">
    <location>
        <begin position="1"/>
        <end position="315"/>
    </location>
</feature>
<proteinExistence type="inferred from homology"/>
<name>SYGA_PSEAB</name>
<sequence>MSQTTPAVRTFQDLILALQNYWAEQGCVVLQPYDMEVGAGTFHTATFLRAIGPETWNAAYVQPSRRPTDGRYGENPNRLQHYYQFQVVLKPNPENFQELYLGSLKAIGIDPLVHDIRFVEDNWESPTLGAWGLGWEIWLNGMEVTQFTYFQQVGGIECYPVTGEITYGLERLAMYLQGVDSVYDLVWTDGPFGKVTYGDVFHQNEVEQSTFNFEHANVPKLFELFDFYESEANRLIALELPLPTYEMVLKASHTFNLLDARRAISVTERQRYILRVRTLARAVAQSYLQARARLGFPMATPELRDEVLAKLKEAE</sequence>
<accession>Q02V72</accession>